<name>MTNN_GEOTN</name>
<organism>
    <name type="scientific">Geobacillus thermodenitrificans (strain NG80-2)</name>
    <dbReference type="NCBI Taxonomy" id="420246"/>
    <lineage>
        <taxon>Bacteria</taxon>
        <taxon>Bacillati</taxon>
        <taxon>Bacillota</taxon>
        <taxon>Bacilli</taxon>
        <taxon>Bacillales</taxon>
        <taxon>Anoxybacillaceae</taxon>
        <taxon>Geobacillus</taxon>
    </lineage>
</organism>
<accession>A4IR66</accession>
<proteinExistence type="inferred from homology"/>
<evidence type="ECO:0000255" key="1">
    <source>
        <dbReference type="HAMAP-Rule" id="MF_01684"/>
    </source>
</evidence>
<keyword id="KW-0028">Amino-acid biosynthesis</keyword>
<keyword id="KW-0378">Hydrolase</keyword>
<keyword id="KW-0486">Methionine biosynthesis</keyword>
<sequence length="236" mass="25177">MKAAIIGAMEEEVAILRSRMEEREEVVIAGCEFSTGRLDGVEAVLLKSGIGKVNAAMGTTLLLDRFRPDFVINTGSAGGFLPSLRVGDLVISDEVVHHDVDVTAFGYAYGQVPGLPARYRADEALVEAAKQAAAQLDGLQAAIGLIATGDSFMNDPKRVEFVRGQFPELCAVEMEAAAIAQVCVQFGTPFVIIRALSDIAGEESNVSFEQFLETAAKHSAELVLSMLTVVQSKAKQ</sequence>
<dbReference type="EC" id="3.2.2.9" evidence="1"/>
<dbReference type="EMBL" id="CP000557">
    <property type="protein sequence ID" value="ABO67820.1"/>
    <property type="molecule type" value="Genomic_DNA"/>
</dbReference>
<dbReference type="RefSeq" id="WP_011887864.1">
    <property type="nucleotide sequence ID" value="NC_009328.1"/>
</dbReference>
<dbReference type="SMR" id="A4IR66"/>
<dbReference type="GeneID" id="87623377"/>
<dbReference type="KEGG" id="gtn:GTNG_2475"/>
<dbReference type="eggNOG" id="COG0775">
    <property type="taxonomic scope" value="Bacteria"/>
</dbReference>
<dbReference type="HOGENOM" id="CLU_031248_2_2_9"/>
<dbReference type="UniPathway" id="UPA00904">
    <property type="reaction ID" value="UER00871"/>
</dbReference>
<dbReference type="Proteomes" id="UP000001578">
    <property type="component" value="Chromosome"/>
</dbReference>
<dbReference type="GO" id="GO:0005829">
    <property type="term" value="C:cytosol"/>
    <property type="evidence" value="ECO:0007669"/>
    <property type="project" value="TreeGrafter"/>
</dbReference>
<dbReference type="GO" id="GO:0008782">
    <property type="term" value="F:adenosylhomocysteine nucleosidase activity"/>
    <property type="evidence" value="ECO:0007669"/>
    <property type="project" value="UniProtKB-UniRule"/>
</dbReference>
<dbReference type="GO" id="GO:0008930">
    <property type="term" value="F:methylthioadenosine nucleosidase activity"/>
    <property type="evidence" value="ECO:0007669"/>
    <property type="project" value="UniProtKB-UniRule"/>
</dbReference>
<dbReference type="GO" id="GO:0019509">
    <property type="term" value="P:L-methionine salvage from methylthioadenosine"/>
    <property type="evidence" value="ECO:0007669"/>
    <property type="project" value="UniProtKB-UniRule"/>
</dbReference>
<dbReference type="GO" id="GO:0019284">
    <property type="term" value="P:L-methionine salvage from S-adenosylmethionine"/>
    <property type="evidence" value="ECO:0007669"/>
    <property type="project" value="TreeGrafter"/>
</dbReference>
<dbReference type="GO" id="GO:0009164">
    <property type="term" value="P:nucleoside catabolic process"/>
    <property type="evidence" value="ECO:0007669"/>
    <property type="project" value="InterPro"/>
</dbReference>
<dbReference type="CDD" id="cd09008">
    <property type="entry name" value="MTAN"/>
    <property type="match status" value="1"/>
</dbReference>
<dbReference type="FunFam" id="3.40.50.1580:FF:000001">
    <property type="entry name" value="MTA/SAH nucleosidase family protein"/>
    <property type="match status" value="1"/>
</dbReference>
<dbReference type="Gene3D" id="3.40.50.1580">
    <property type="entry name" value="Nucleoside phosphorylase domain"/>
    <property type="match status" value="1"/>
</dbReference>
<dbReference type="HAMAP" id="MF_01684">
    <property type="entry name" value="Salvage_MtnN"/>
    <property type="match status" value="1"/>
</dbReference>
<dbReference type="InterPro" id="IPR010049">
    <property type="entry name" value="MTA_SAH_Nsdase"/>
</dbReference>
<dbReference type="InterPro" id="IPR000845">
    <property type="entry name" value="Nucleoside_phosphorylase_d"/>
</dbReference>
<dbReference type="InterPro" id="IPR035994">
    <property type="entry name" value="Nucleoside_phosphorylase_sf"/>
</dbReference>
<dbReference type="NCBIfam" id="TIGR01704">
    <property type="entry name" value="MTA_SAH-Nsdase"/>
    <property type="match status" value="1"/>
</dbReference>
<dbReference type="NCBIfam" id="NF004079">
    <property type="entry name" value="PRK05584.1"/>
    <property type="match status" value="1"/>
</dbReference>
<dbReference type="PANTHER" id="PTHR46832">
    <property type="entry name" value="5'-METHYLTHIOADENOSINE/S-ADENOSYLHOMOCYSTEINE NUCLEOSIDASE"/>
    <property type="match status" value="1"/>
</dbReference>
<dbReference type="PANTHER" id="PTHR46832:SF1">
    <property type="entry name" value="5'-METHYLTHIOADENOSINE_S-ADENOSYLHOMOCYSTEINE NUCLEOSIDASE"/>
    <property type="match status" value="1"/>
</dbReference>
<dbReference type="Pfam" id="PF01048">
    <property type="entry name" value="PNP_UDP_1"/>
    <property type="match status" value="1"/>
</dbReference>
<dbReference type="SUPFAM" id="SSF53167">
    <property type="entry name" value="Purine and uridine phosphorylases"/>
    <property type="match status" value="1"/>
</dbReference>
<reference key="1">
    <citation type="journal article" date="2007" name="Proc. Natl. Acad. Sci. U.S.A.">
        <title>Genome and proteome of long-chain alkane degrading Geobacillus thermodenitrificans NG80-2 isolated from a deep-subsurface oil reservoir.</title>
        <authorList>
            <person name="Feng L."/>
            <person name="Wang W."/>
            <person name="Cheng J."/>
            <person name="Ren Y."/>
            <person name="Zhao G."/>
            <person name="Gao C."/>
            <person name="Tang Y."/>
            <person name="Liu X."/>
            <person name="Han W."/>
            <person name="Peng X."/>
            <person name="Liu R."/>
            <person name="Wang L."/>
        </authorList>
    </citation>
    <scope>NUCLEOTIDE SEQUENCE [LARGE SCALE GENOMIC DNA]</scope>
    <source>
        <strain>NG80-2</strain>
    </source>
</reference>
<feature type="chain" id="PRO_0000359303" description="5'-methylthioadenosine/S-adenosylhomocysteine nucleosidase">
    <location>
        <begin position="1"/>
        <end position="236"/>
    </location>
</feature>
<feature type="active site" description="Proton acceptor" evidence="1">
    <location>
        <position position="12"/>
    </location>
</feature>
<feature type="active site" description="Proton donor" evidence="1">
    <location>
        <position position="198"/>
    </location>
</feature>
<feature type="binding site" evidence="1">
    <location>
        <position position="78"/>
    </location>
    <ligand>
        <name>substrate</name>
    </ligand>
</feature>
<feature type="binding site" evidence="1">
    <location>
        <position position="153"/>
    </location>
    <ligand>
        <name>substrate</name>
    </ligand>
</feature>
<feature type="binding site" evidence="1">
    <location>
        <begin position="174"/>
        <end position="175"/>
    </location>
    <ligand>
        <name>substrate</name>
    </ligand>
</feature>
<gene>
    <name evidence="1" type="primary">mtnN</name>
    <name type="ordered locus">GTNG_2475</name>
</gene>
<protein>
    <recommendedName>
        <fullName evidence="1">5'-methylthioadenosine/S-adenosylhomocysteine nucleosidase</fullName>
        <shortName evidence="1">MTA/SAH nucleosidase</shortName>
        <shortName evidence="1">MTAN</shortName>
        <ecNumber evidence="1">3.2.2.9</ecNumber>
    </recommendedName>
    <alternativeName>
        <fullName evidence="1">5'-deoxyadenosine nucleosidase</fullName>
        <shortName evidence="1">DOA nucleosidase</shortName>
        <shortName evidence="1">dAdo nucleosidase</shortName>
    </alternativeName>
    <alternativeName>
        <fullName evidence="1">5'-methylthioadenosine nucleosidase</fullName>
        <shortName evidence="1">MTA nucleosidase</shortName>
    </alternativeName>
    <alternativeName>
        <fullName evidence="1">S-adenosylhomocysteine nucleosidase</fullName>
        <shortName evidence="1">AdoHcy nucleosidase</shortName>
        <shortName evidence="1">SAH nucleosidase</shortName>
        <shortName evidence="1">SRH nucleosidase</shortName>
    </alternativeName>
</protein>
<comment type="function">
    <text evidence="1">Catalyzes the irreversible cleavage of the glycosidic bond in both 5'-methylthioadenosine (MTA) and S-adenosylhomocysteine (SAH/AdoHcy) to adenine and the corresponding thioribose, 5'-methylthioribose and S-ribosylhomocysteine, respectively. Also cleaves 5'-deoxyadenosine, a toxic by-product of radical S-adenosylmethionine (SAM) enzymes, into 5-deoxyribose and adenine.</text>
</comment>
<comment type="catalytic activity">
    <reaction evidence="1">
        <text>S-adenosyl-L-homocysteine + H2O = S-(5-deoxy-D-ribos-5-yl)-L-homocysteine + adenine</text>
        <dbReference type="Rhea" id="RHEA:17805"/>
        <dbReference type="ChEBI" id="CHEBI:15377"/>
        <dbReference type="ChEBI" id="CHEBI:16708"/>
        <dbReference type="ChEBI" id="CHEBI:57856"/>
        <dbReference type="ChEBI" id="CHEBI:58195"/>
        <dbReference type="EC" id="3.2.2.9"/>
    </reaction>
</comment>
<comment type="catalytic activity">
    <reaction evidence="1">
        <text>S-methyl-5'-thioadenosine + H2O = 5-(methylsulfanyl)-D-ribose + adenine</text>
        <dbReference type="Rhea" id="RHEA:13617"/>
        <dbReference type="ChEBI" id="CHEBI:15377"/>
        <dbReference type="ChEBI" id="CHEBI:16708"/>
        <dbReference type="ChEBI" id="CHEBI:17509"/>
        <dbReference type="ChEBI" id="CHEBI:78440"/>
        <dbReference type="EC" id="3.2.2.9"/>
    </reaction>
</comment>
<comment type="catalytic activity">
    <reaction evidence="1">
        <text>5'-deoxyadenosine + H2O = 5-deoxy-D-ribose + adenine</text>
        <dbReference type="Rhea" id="RHEA:29859"/>
        <dbReference type="ChEBI" id="CHEBI:15377"/>
        <dbReference type="ChEBI" id="CHEBI:16708"/>
        <dbReference type="ChEBI" id="CHEBI:17319"/>
        <dbReference type="ChEBI" id="CHEBI:149540"/>
        <dbReference type="EC" id="3.2.2.9"/>
    </reaction>
    <physiologicalReaction direction="left-to-right" evidence="1">
        <dbReference type="Rhea" id="RHEA:29860"/>
    </physiologicalReaction>
</comment>
<comment type="pathway">
    <text evidence="1">Amino-acid biosynthesis; L-methionine biosynthesis via salvage pathway; S-methyl-5-thio-alpha-D-ribose 1-phosphate from S-methyl-5'-thioadenosine (hydrolase route): step 1/2.</text>
</comment>
<comment type="similarity">
    <text evidence="1">Belongs to the PNP/UDP phosphorylase family. MtnN subfamily.</text>
</comment>